<evidence type="ECO:0000255" key="1">
    <source>
        <dbReference type="HAMAP-Rule" id="MF_01358"/>
    </source>
</evidence>
<organism>
    <name type="scientific">Microcystis aeruginosa (strain NIES-843 / IAM M-2473)</name>
    <dbReference type="NCBI Taxonomy" id="449447"/>
    <lineage>
        <taxon>Bacteria</taxon>
        <taxon>Bacillati</taxon>
        <taxon>Cyanobacteriota</taxon>
        <taxon>Cyanophyceae</taxon>
        <taxon>Oscillatoriophycideae</taxon>
        <taxon>Chroococcales</taxon>
        <taxon>Microcystaceae</taxon>
        <taxon>Microcystis</taxon>
    </lineage>
</organism>
<dbReference type="EC" id="7.1.1.-" evidence="1"/>
<dbReference type="EMBL" id="AP009552">
    <property type="protein sequence ID" value="BAG05048.1"/>
    <property type="molecule type" value="Genomic_DNA"/>
</dbReference>
<dbReference type="RefSeq" id="WP_002760089.1">
    <property type="nucleotide sequence ID" value="NC_010296.1"/>
</dbReference>
<dbReference type="SMR" id="B0JY10"/>
<dbReference type="STRING" id="449447.MAE_52260"/>
<dbReference type="PaxDb" id="449447-MAE_52260"/>
<dbReference type="EnsemblBacteria" id="BAG05048">
    <property type="protein sequence ID" value="BAG05048"/>
    <property type="gene ID" value="MAE_52260"/>
</dbReference>
<dbReference type="KEGG" id="mar:MAE_52260"/>
<dbReference type="eggNOG" id="COG0649">
    <property type="taxonomic scope" value="Bacteria"/>
</dbReference>
<dbReference type="HOGENOM" id="CLU_015134_1_2_3"/>
<dbReference type="BioCyc" id="MAER449447:MAE_RS22725-MONOMER"/>
<dbReference type="Proteomes" id="UP000001510">
    <property type="component" value="Chromosome"/>
</dbReference>
<dbReference type="GO" id="GO:0031676">
    <property type="term" value="C:plasma membrane-derived thylakoid membrane"/>
    <property type="evidence" value="ECO:0007669"/>
    <property type="project" value="UniProtKB-SubCell"/>
</dbReference>
<dbReference type="GO" id="GO:0051287">
    <property type="term" value="F:NAD binding"/>
    <property type="evidence" value="ECO:0007669"/>
    <property type="project" value="InterPro"/>
</dbReference>
<dbReference type="GO" id="GO:0016655">
    <property type="term" value="F:oxidoreductase activity, acting on NAD(P)H, quinone or similar compound as acceptor"/>
    <property type="evidence" value="ECO:0007669"/>
    <property type="project" value="UniProtKB-UniRule"/>
</dbReference>
<dbReference type="GO" id="GO:0048038">
    <property type="term" value="F:quinone binding"/>
    <property type="evidence" value="ECO:0007669"/>
    <property type="project" value="UniProtKB-KW"/>
</dbReference>
<dbReference type="GO" id="GO:0019684">
    <property type="term" value="P:photosynthesis, light reaction"/>
    <property type="evidence" value="ECO:0007669"/>
    <property type="project" value="UniProtKB-UniRule"/>
</dbReference>
<dbReference type="Gene3D" id="1.10.645.10">
    <property type="entry name" value="Cytochrome-c3 Hydrogenase, chain B"/>
    <property type="match status" value="1"/>
</dbReference>
<dbReference type="HAMAP" id="MF_01358">
    <property type="entry name" value="NDH1_NuoD"/>
    <property type="match status" value="1"/>
</dbReference>
<dbReference type="InterPro" id="IPR001135">
    <property type="entry name" value="NADH_Q_OxRdtase_suD"/>
</dbReference>
<dbReference type="InterPro" id="IPR014029">
    <property type="entry name" value="NADH_UbQ_OxRdtase_49kDa_CS"/>
</dbReference>
<dbReference type="InterPro" id="IPR022885">
    <property type="entry name" value="NDH1_su_D/H"/>
</dbReference>
<dbReference type="InterPro" id="IPR029014">
    <property type="entry name" value="NiFe-Hase_large"/>
</dbReference>
<dbReference type="NCBIfam" id="TIGR01962">
    <property type="entry name" value="NuoD"/>
    <property type="match status" value="1"/>
</dbReference>
<dbReference type="NCBIfam" id="NF004739">
    <property type="entry name" value="PRK06075.1"/>
    <property type="match status" value="1"/>
</dbReference>
<dbReference type="NCBIfam" id="NF005649">
    <property type="entry name" value="PRK07415.1"/>
    <property type="match status" value="1"/>
</dbReference>
<dbReference type="PANTHER" id="PTHR11993:SF10">
    <property type="entry name" value="NADH DEHYDROGENASE [UBIQUINONE] IRON-SULFUR PROTEIN 2, MITOCHONDRIAL"/>
    <property type="match status" value="1"/>
</dbReference>
<dbReference type="PANTHER" id="PTHR11993">
    <property type="entry name" value="NADH-UBIQUINONE OXIDOREDUCTASE 49 KDA SUBUNIT"/>
    <property type="match status" value="1"/>
</dbReference>
<dbReference type="Pfam" id="PF00346">
    <property type="entry name" value="Complex1_49kDa"/>
    <property type="match status" value="1"/>
</dbReference>
<dbReference type="SUPFAM" id="SSF56762">
    <property type="entry name" value="HydB/Nqo4-like"/>
    <property type="match status" value="1"/>
</dbReference>
<dbReference type="PROSITE" id="PS00535">
    <property type="entry name" value="COMPLEX1_49K"/>
    <property type="match status" value="1"/>
</dbReference>
<protein>
    <recommendedName>
        <fullName evidence="1">NAD(P)H-quinone oxidoreductase subunit H</fullName>
        <ecNumber evidence="1">7.1.1.-</ecNumber>
    </recommendedName>
    <alternativeName>
        <fullName>NAD(P)H dehydrogenase subunit H</fullName>
    </alternativeName>
    <alternativeName>
        <fullName evidence="1">NADH-plastoquinone oxidoreductase subunit H</fullName>
    </alternativeName>
    <alternativeName>
        <fullName evidence="1">NDH-1 subunit H</fullName>
        <shortName evidence="1">NDH-H</shortName>
    </alternativeName>
</protein>
<comment type="function">
    <text evidence="1">NDH-1 shuttles electrons from an unknown electron donor, via FMN and iron-sulfur (Fe-S) centers, to quinones in the respiratory and/or the photosynthetic chain. The immediate electron acceptor for the enzyme in this species is believed to be plastoquinone. Couples the redox reaction to proton translocation, and thus conserves the redox energy in a proton gradient. Cyanobacterial NDH-1 also plays a role in inorganic carbon-concentration.</text>
</comment>
<comment type="catalytic activity">
    <reaction evidence="1">
        <text>a plastoquinone + NADH + (n+1) H(+)(in) = a plastoquinol + NAD(+) + n H(+)(out)</text>
        <dbReference type="Rhea" id="RHEA:42608"/>
        <dbReference type="Rhea" id="RHEA-COMP:9561"/>
        <dbReference type="Rhea" id="RHEA-COMP:9562"/>
        <dbReference type="ChEBI" id="CHEBI:15378"/>
        <dbReference type="ChEBI" id="CHEBI:17757"/>
        <dbReference type="ChEBI" id="CHEBI:57540"/>
        <dbReference type="ChEBI" id="CHEBI:57945"/>
        <dbReference type="ChEBI" id="CHEBI:62192"/>
    </reaction>
</comment>
<comment type="catalytic activity">
    <reaction evidence="1">
        <text>a plastoquinone + NADPH + (n+1) H(+)(in) = a plastoquinol + NADP(+) + n H(+)(out)</text>
        <dbReference type="Rhea" id="RHEA:42612"/>
        <dbReference type="Rhea" id="RHEA-COMP:9561"/>
        <dbReference type="Rhea" id="RHEA-COMP:9562"/>
        <dbReference type="ChEBI" id="CHEBI:15378"/>
        <dbReference type="ChEBI" id="CHEBI:17757"/>
        <dbReference type="ChEBI" id="CHEBI:57783"/>
        <dbReference type="ChEBI" id="CHEBI:58349"/>
        <dbReference type="ChEBI" id="CHEBI:62192"/>
    </reaction>
</comment>
<comment type="subunit">
    <text evidence="1">NDH-1 can be composed of about 15 different subunits; different subcomplexes with different compositions have been identified which probably have different functions.</text>
</comment>
<comment type="subcellular location">
    <subcellularLocation>
        <location evidence="1">Cellular thylakoid membrane</location>
        <topology evidence="1">Peripheral membrane protein</topology>
        <orientation evidence="1">Cytoplasmic side</orientation>
    </subcellularLocation>
</comment>
<comment type="similarity">
    <text evidence="1">Belongs to the complex I 49 kDa subunit family.</text>
</comment>
<name>NDHH_MICAN</name>
<accession>B0JY10</accession>
<proteinExistence type="inferred from homology"/>
<keyword id="KW-0472">Membrane</keyword>
<keyword id="KW-0520">NAD</keyword>
<keyword id="KW-0521">NADP</keyword>
<keyword id="KW-0618">Plastoquinone</keyword>
<keyword id="KW-0874">Quinone</keyword>
<keyword id="KW-0793">Thylakoid</keyword>
<keyword id="KW-1278">Translocase</keyword>
<keyword id="KW-0813">Transport</keyword>
<reference key="1">
    <citation type="journal article" date="2007" name="DNA Res.">
        <title>Complete genomic structure of the bloom-forming toxic cyanobacterium Microcystis aeruginosa NIES-843.</title>
        <authorList>
            <person name="Kaneko T."/>
            <person name="Nakajima N."/>
            <person name="Okamoto S."/>
            <person name="Suzuki I."/>
            <person name="Tanabe Y."/>
            <person name="Tamaoki M."/>
            <person name="Nakamura Y."/>
            <person name="Kasai F."/>
            <person name="Watanabe A."/>
            <person name="Kawashima K."/>
            <person name="Kishida Y."/>
            <person name="Ono A."/>
            <person name="Shimizu Y."/>
            <person name="Takahashi C."/>
            <person name="Minami C."/>
            <person name="Fujishiro T."/>
            <person name="Kohara M."/>
            <person name="Katoh M."/>
            <person name="Nakazaki N."/>
            <person name="Nakayama S."/>
            <person name="Yamada M."/>
            <person name="Tabata S."/>
            <person name="Watanabe M.M."/>
        </authorList>
    </citation>
    <scope>NUCLEOTIDE SEQUENCE [LARGE SCALE GENOMIC DNA]</scope>
    <source>
        <strain>NIES-843 / IAM M-247</strain>
    </source>
</reference>
<gene>
    <name evidence="1" type="primary">ndhH</name>
    <name type="ordered locus">MAE_52260</name>
</gene>
<feature type="chain" id="PRO_0000371889" description="NAD(P)H-quinone oxidoreductase subunit H">
    <location>
        <begin position="1"/>
        <end position="394"/>
    </location>
</feature>
<sequence length="394" mass="45425">MAKIETRTEPMVLNMGPHHPSMHGVLRLIVTLDGEDVIDCEPVIGYLHRGMEKIAENRTNVMYVPYVSRWDYAAGMFNEAITVNAPEKLADIAVPKRAQYIRVIMLELNRIANHLLWLGPFMADVGAQTPFFYIFREREMIYDLWEAATGMRLINNNYFRIGGVAVDLPYGWVDKCVDFCDYFDPKVDEYEKLITNNPIFRRRIEGIGCITRDEAINWGLSGPMLRASGVKWDLRKVDHYECYDDFDWEVHWETAGDCFARYLVRIREMRESVKIIRQALKGLPGGPYENLEAKRMAEGKKSAWNDFDYQYIAKKVAPTFKIPKGEHYVRLESGKGELGIFIVGNDDVFPWRWKIRAADFNNLQILPHILKGVKVADIMAILGSIDIIMGSVDR</sequence>